<protein>
    <recommendedName>
        <fullName>Ubiquitin domain-containing protein 1</fullName>
    </recommendedName>
</protein>
<evidence type="ECO:0000250" key="1">
    <source>
        <dbReference type="UniProtKB" id="Q9HAC8"/>
    </source>
</evidence>
<evidence type="ECO:0000255" key="2">
    <source>
        <dbReference type="PROSITE-ProRule" id="PRU00214"/>
    </source>
</evidence>
<evidence type="ECO:0000256" key="3">
    <source>
        <dbReference type="SAM" id="MobiDB-lite"/>
    </source>
</evidence>
<name>UBTD1_BOVIN</name>
<keyword id="KW-1185">Reference proteome</keyword>
<dbReference type="EMBL" id="BC103175">
    <property type="protein sequence ID" value="AAI03176.1"/>
    <property type="molecule type" value="mRNA"/>
</dbReference>
<dbReference type="RefSeq" id="NP_001029433.1">
    <property type="nucleotide sequence ID" value="NM_001034261.2"/>
</dbReference>
<dbReference type="SMR" id="Q3ZBQ1"/>
<dbReference type="FunCoup" id="Q3ZBQ1">
    <property type="interactions" value="442"/>
</dbReference>
<dbReference type="STRING" id="9913.ENSBTAP00000016906"/>
<dbReference type="PaxDb" id="9913-ENSBTAP00000016906"/>
<dbReference type="GeneID" id="506002"/>
<dbReference type="KEGG" id="bta:506002"/>
<dbReference type="CTD" id="80019"/>
<dbReference type="VEuPathDB" id="HostDB:ENSBTAG00000012719"/>
<dbReference type="eggNOG" id="KOG0013">
    <property type="taxonomic scope" value="Eukaryota"/>
</dbReference>
<dbReference type="HOGENOM" id="CLU_070348_0_0_1"/>
<dbReference type="InParanoid" id="Q3ZBQ1"/>
<dbReference type="OMA" id="GCMGRYL"/>
<dbReference type="OrthoDB" id="1640476at2759"/>
<dbReference type="TreeFam" id="TF323925"/>
<dbReference type="Proteomes" id="UP000009136">
    <property type="component" value="Chromosome 26"/>
</dbReference>
<dbReference type="Bgee" id="ENSBTAG00000012719">
    <property type="expression patterns" value="Expressed in laryngeal cartilage and 104 other cell types or tissues"/>
</dbReference>
<dbReference type="CDD" id="cd17120">
    <property type="entry name" value="Ubl_UBTD1"/>
    <property type="match status" value="1"/>
</dbReference>
<dbReference type="Gene3D" id="3.10.20.90">
    <property type="entry name" value="Phosphatidylinositol 3-kinase Catalytic Subunit, Chain A, domain 1"/>
    <property type="match status" value="1"/>
</dbReference>
<dbReference type="Gene3D" id="1.20.225.20">
    <property type="entry name" value="Ub domain-containing protein, DC-UbP/UBTD2, N-terminal domain"/>
    <property type="match status" value="1"/>
</dbReference>
<dbReference type="InterPro" id="IPR032752">
    <property type="entry name" value="DC-UbP/UBTD2_N"/>
</dbReference>
<dbReference type="InterPro" id="IPR038169">
    <property type="entry name" value="DC-UbP/UBTD2_N_sf"/>
</dbReference>
<dbReference type="InterPro" id="IPR000626">
    <property type="entry name" value="Ubiquitin-like_dom"/>
</dbReference>
<dbReference type="InterPro" id="IPR029071">
    <property type="entry name" value="Ubiquitin-like_domsf"/>
</dbReference>
<dbReference type="InterPro" id="IPR019956">
    <property type="entry name" value="Ubiquitin_dom"/>
</dbReference>
<dbReference type="InterPro" id="IPR039869">
    <property type="entry name" value="UBTD1/2"/>
</dbReference>
<dbReference type="PANTHER" id="PTHR13609">
    <property type="entry name" value="UBIQUITIN DOMAIN CONTAINING 1 PROTEIN-RELATED"/>
    <property type="match status" value="1"/>
</dbReference>
<dbReference type="Pfam" id="PF16455">
    <property type="entry name" value="UBD"/>
    <property type="match status" value="1"/>
</dbReference>
<dbReference type="Pfam" id="PF00240">
    <property type="entry name" value="ubiquitin"/>
    <property type="match status" value="1"/>
</dbReference>
<dbReference type="PRINTS" id="PR00348">
    <property type="entry name" value="UBIQUITIN"/>
</dbReference>
<dbReference type="SMART" id="SM00213">
    <property type="entry name" value="UBQ"/>
    <property type="match status" value="1"/>
</dbReference>
<dbReference type="SUPFAM" id="SSF54236">
    <property type="entry name" value="Ubiquitin-like"/>
    <property type="match status" value="1"/>
</dbReference>
<dbReference type="PROSITE" id="PS50053">
    <property type="entry name" value="UBIQUITIN_2"/>
    <property type="match status" value="1"/>
</dbReference>
<comment type="function">
    <text evidence="1">May be involved in the regulation of cellular senescence through a positive feedback loop with TP53. Is a TP53 downstream target gene that increases the stability of TP53 protein by promoting the ubiquitination and degradation of MDM2.</text>
</comment>
<comment type="subunit">
    <text evidence="1">Interacts with UBTD1.</text>
</comment>
<organism>
    <name type="scientific">Bos taurus</name>
    <name type="common">Bovine</name>
    <dbReference type="NCBI Taxonomy" id="9913"/>
    <lineage>
        <taxon>Eukaryota</taxon>
        <taxon>Metazoa</taxon>
        <taxon>Chordata</taxon>
        <taxon>Craniata</taxon>
        <taxon>Vertebrata</taxon>
        <taxon>Euteleostomi</taxon>
        <taxon>Mammalia</taxon>
        <taxon>Eutheria</taxon>
        <taxon>Laurasiatheria</taxon>
        <taxon>Artiodactyla</taxon>
        <taxon>Ruminantia</taxon>
        <taxon>Pecora</taxon>
        <taxon>Bovidae</taxon>
        <taxon>Bovinae</taxon>
        <taxon>Bos</taxon>
    </lineage>
</organism>
<proteinExistence type="evidence at transcript level"/>
<reference key="1">
    <citation type="submission" date="2005-08" db="EMBL/GenBank/DDBJ databases">
        <authorList>
            <consortium name="NIH - Mammalian Gene Collection (MGC) project"/>
        </authorList>
    </citation>
    <scope>NUCLEOTIDE SEQUENCE [LARGE SCALE MRNA]</scope>
    <source>
        <strain>Hereford</strain>
        <tissue>Hypothalamus</tissue>
    </source>
</reference>
<sequence length="227" mass="26002">MGNCVGRQRRERPTAPGHPRKRAGRNEPLKKERLKWKSDYPMTDGQLRSKRDEFWDTAPAFEGRKEIWDALKAAAYAAEANDHELAQAILDGASITLPHGTLCECYDELGNRYQLPIYCLSPPVNLLLEHTEEESLEPPEPTPSVRREFPLKVRLSTGKDVRLSASLPDTVGQLKRQLHTQEGIEPSWQRWFFSGKLLTDRTRLQETKIQKDFVIQVIINQPPPPQD</sequence>
<feature type="chain" id="PRO_0000242673" description="Ubiquitin domain-containing protein 1">
    <location>
        <begin position="1"/>
        <end position="227"/>
    </location>
</feature>
<feature type="domain" description="Ubiquitin-like" evidence="2">
    <location>
        <begin position="149"/>
        <end position="224"/>
    </location>
</feature>
<feature type="region of interest" description="Disordered" evidence="3">
    <location>
        <begin position="1"/>
        <end position="36"/>
    </location>
</feature>
<feature type="compositionally biased region" description="Basic and acidic residues" evidence="3">
    <location>
        <begin position="24"/>
        <end position="36"/>
    </location>
</feature>
<gene>
    <name type="primary">UBTD1</name>
</gene>
<accession>Q3ZBQ1</accession>